<reference key="1">
    <citation type="journal article" date="1996" name="Gene">
        <title>Cloning, sequence and expression in Escherichia coli of the gene encoding phosphofructokinase from Bacillus macquariensis.</title>
        <authorList>
            <person name="Rouwendal G.J.A."/>
            <person name="Zwiers L.H."/>
            <person name="Wolbert E.J.H."/>
            <person name="Springer J."/>
            <person name="Mooibroek H."/>
            <person name="Huizing H.J."/>
        </authorList>
    </citation>
    <scope>NUCLEOTIDE SEQUENCE [GENOMIC DNA]</scope>
    <source>
        <strain>ATCC 23464 / DSM 2 / BCRC 15915 / LMG 13289 / NCIMB 9934 / NCTC 10419 / NRRL B-14306</strain>
    </source>
</reference>
<protein>
    <recommendedName>
        <fullName evidence="1">ATP-dependent 6-phosphofructokinase</fullName>
        <shortName evidence="1">ATP-PFK</shortName>
        <shortName evidence="1">Phosphofructokinase</shortName>
        <ecNumber evidence="1">2.7.1.11</ecNumber>
    </recommendedName>
    <alternativeName>
        <fullName evidence="1">Phosphohexokinase</fullName>
    </alternativeName>
</protein>
<gene>
    <name evidence="1" type="primary">pfkA</name>
    <name type="synonym">pfk</name>
</gene>
<keyword id="KW-0021">Allosteric enzyme</keyword>
<keyword id="KW-0067">ATP-binding</keyword>
<keyword id="KW-0963">Cytoplasm</keyword>
<keyword id="KW-0324">Glycolysis</keyword>
<keyword id="KW-0418">Kinase</keyword>
<keyword id="KW-0460">Magnesium</keyword>
<keyword id="KW-0479">Metal-binding</keyword>
<keyword id="KW-0547">Nucleotide-binding</keyword>
<keyword id="KW-0808">Transferase</keyword>
<proteinExistence type="inferred from homology"/>
<comment type="function">
    <text evidence="1">Catalyzes the phosphorylation of D-fructose 6-phosphate to fructose 1,6-bisphosphate by ATP, the first committing step of glycolysis.</text>
</comment>
<comment type="catalytic activity">
    <reaction evidence="1">
        <text>beta-D-fructose 6-phosphate + ATP = beta-D-fructose 1,6-bisphosphate + ADP + H(+)</text>
        <dbReference type="Rhea" id="RHEA:16109"/>
        <dbReference type="ChEBI" id="CHEBI:15378"/>
        <dbReference type="ChEBI" id="CHEBI:30616"/>
        <dbReference type="ChEBI" id="CHEBI:32966"/>
        <dbReference type="ChEBI" id="CHEBI:57634"/>
        <dbReference type="ChEBI" id="CHEBI:456216"/>
        <dbReference type="EC" id="2.7.1.11"/>
    </reaction>
</comment>
<comment type="cofactor">
    <cofactor evidence="1">
        <name>Mg(2+)</name>
        <dbReference type="ChEBI" id="CHEBI:18420"/>
    </cofactor>
</comment>
<comment type="activity regulation">
    <text evidence="1">Allosterically activated by ADP and other diphosphonucleosides, and allosterically inhibited by phosphoenolpyruvate.</text>
</comment>
<comment type="pathway">
    <text evidence="1">Carbohydrate degradation; glycolysis; D-glyceraldehyde 3-phosphate and glycerone phosphate from D-glucose: step 3/4.</text>
</comment>
<comment type="subunit">
    <text evidence="1">Homotetramer.</text>
</comment>
<comment type="subcellular location">
    <subcellularLocation>
        <location evidence="1">Cytoplasm</location>
    </subcellularLocation>
</comment>
<comment type="similarity">
    <text evidence="1">Belongs to the phosphofructokinase type A (PFKA) family. ATP-dependent PFK group I subfamily. Prokaryotic clade 'B1' sub-subfamily.</text>
</comment>
<dbReference type="EC" id="2.7.1.11" evidence="1"/>
<dbReference type="EMBL" id="X76484">
    <property type="protein sequence ID" value="CAA54022.1"/>
    <property type="molecule type" value="Genomic_DNA"/>
</dbReference>
<dbReference type="PIR" id="S39248">
    <property type="entry name" value="S39248"/>
</dbReference>
<dbReference type="SMR" id="Q59214"/>
<dbReference type="SABIO-RK" id="Q59214"/>
<dbReference type="UniPathway" id="UPA00109">
    <property type="reaction ID" value="UER00182"/>
</dbReference>
<dbReference type="GO" id="GO:0005945">
    <property type="term" value="C:6-phosphofructokinase complex"/>
    <property type="evidence" value="ECO:0007669"/>
    <property type="project" value="TreeGrafter"/>
</dbReference>
<dbReference type="GO" id="GO:0003872">
    <property type="term" value="F:6-phosphofructokinase activity"/>
    <property type="evidence" value="ECO:0007669"/>
    <property type="project" value="UniProtKB-UniRule"/>
</dbReference>
<dbReference type="GO" id="GO:0016208">
    <property type="term" value="F:AMP binding"/>
    <property type="evidence" value="ECO:0007669"/>
    <property type="project" value="TreeGrafter"/>
</dbReference>
<dbReference type="GO" id="GO:0005524">
    <property type="term" value="F:ATP binding"/>
    <property type="evidence" value="ECO:0007669"/>
    <property type="project" value="UniProtKB-KW"/>
</dbReference>
<dbReference type="GO" id="GO:0070095">
    <property type="term" value="F:fructose-6-phosphate binding"/>
    <property type="evidence" value="ECO:0007669"/>
    <property type="project" value="TreeGrafter"/>
</dbReference>
<dbReference type="GO" id="GO:0042802">
    <property type="term" value="F:identical protein binding"/>
    <property type="evidence" value="ECO:0007669"/>
    <property type="project" value="TreeGrafter"/>
</dbReference>
<dbReference type="GO" id="GO:0046872">
    <property type="term" value="F:metal ion binding"/>
    <property type="evidence" value="ECO:0007669"/>
    <property type="project" value="UniProtKB-KW"/>
</dbReference>
<dbReference type="GO" id="GO:0048029">
    <property type="term" value="F:monosaccharide binding"/>
    <property type="evidence" value="ECO:0007669"/>
    <property type="project" value="TreeGrafter"/>
</dbReference>
<dbReference type="GO" id="GO:0061621">
    <property type="term" value="P:canonical glycolysis"/>
    <property type="evidence" value="ECO:0007669"/>
    <property type="project" value="TreeGrafter"/>
</dbReference>
<dbReference type="GO" id="GO:0030388">
    <property type="term" value="P:fructose 1,6-bisphosphate metabolic process"/>
    <property type="evidence" value="ECO:0007669"/>
    <property type="project" value="TreeGrafter"/>
</dbReference>
<dbReference type="GO" id="GO:0006002">
    <property type="term" value="P:fructose 6-phosphate metabolic process"/>
    <property type="evidence" value="ECO:0007669"/>
    <property type="project" value="InterPro"/>
</dbReference>
<dbReference type="FunFam" id="3.40.50.450:FF:000001">
    <property type="entry name" value="ATP-dependent 6-phosphofructokinase"/>
    <property type="match status" value="1"/>
</dbReference>
<dbReference type="FunFam" id="3.40.50.460:FF:000002">
    <property type="entry name" value="ATP-dependent 6-phosphofructokinase"/>
    <property type="match status" value="1"/>
</dbReference>
<dbReference type="Gene3D" id="3.40.50.450">
    <property type="match status" value="1"/>
</dbReference>
<dbReference type="Gene3D" id="3.40.50.460">
    <property type="entry name" value="Phosphofructokinase domain"/>
    <property type="match status" value="1"/>
</dbReference>
<dbReference type="HAMAP" id="MF_00339">
    <property type="entry name" value="Phosphofructokinase_I_B1"/>
    <property type="match status" value="1"/>
</dbReference>
<dbReference type="InterPro" id="IPR022953">
    <property type="entry name" value="ATP_PFK"/>
</dbReference>
<dbReference type="InterPro" id="IPR012003">
    <property type="entry name" value="ATP_PFK_prok-type"/>
</dbReference>
<dbReference type="InterPro" id="IPR012828">
    <property type="entry name" value="PFKA_ATP_prok"/>
</dbReference>
<dbReference type="InterPro" id="IPR015912">
    <property type="entry name" value="Phosphofructokinase_CS"/>
</dbReference>
<dbReference type="InterPro" id="IPR000023">
    <property type="entry name" value="Phosphofructokinase_dom"/>
</dbReference>
<dbReference type="InterPro" id="IPR035966">
    <property type="entry name" value="PKF_sf"/>
</dbReference>
<dbReference type="NCBIfam" id="TIGR02482">
    <property type="entry name" value="PFKA_ATP"/>
    <property type="match status" value="1"/>
</dbReference>
<dbReference type="NCBIfam" id="NF002872">
    <property type="entry name" value="PRK03202.1"/>
    <property type="match status" value="1"/>
</dbReference>
<dbReference type="PANTHER" id="PTHR13697:SF4">
    <property type="entry name" value="ATP-DEPENDENT 6-PHOSPHOFRUCTOKINASE"/>
    <property type="match status" value="1"/>
</dbReference>
<dbReference type="PANTHER" id="PTHR13697">
    <property type="entry name" value="PHOSPHOFRUCTOKINASE"/>
    <property type="match status" value="1"/>
</dbReference>
<dbReference type="Pfam" id="PF00365">
    <property type="entry name" value="PFK"/>
    <property type="match status" value="1"/>
</dbReference>
<dbReference type="PIRSF" id="PIRSF000532">
    <property type="entry name" value="ATP_PFK_prok"/>
    <property type="match status" value="1"/>
</dbReference>
<dbReference type="PRINTS" id="PR00476">
    <property type="entry name" value="PHFRCTKINASE"/>
</dbReference>
<dbReference type="SUPFAM" id="SSF53784">
    <property type="entry name" value="Phosphofructokinase"/>
    <property type="match status" value="1"/>
</dbReference>
<dbReference type="PROSITE" id="PS00433">
    <property type="entry name" value="PHOSPHOFRUCTOKINASE"/>
    <property type="match status" value="1"/>
</dbReference>
<accession>Q59214</accession>
<evidence type="ECO:0000255" key="1">
    <source>
        <dbReference type="HAMAP-Rule" id="MF_00339"/>
    </source>
</evidence>
<feature type="chain" id="PRO_0000111933" description="ATP-dependent 6-phosphofructokinase">
    <location>
        <begin position="1"/>
        <end position="322"/>
    </location>
</feature>
<feature type="active site" description="Proton acceptor" evidence="1">
    <location>
        <position position="129"/>
    </location>
</feature>
<feature type="binding site" evidence="1">
    <location>
        <position position="13"/>
    </location>
    <ligand>
        <name>ATP</name>
        <dbReference type="ChEBI" id="CHEBI:30616"/>
    </ligand>
</feature>
<feature type="binding site" evidence="1">
    <location>
        <begin position="23"/>
        <end position="27"/>
    </location>
    <ligand>
        <name>ADP</name>
        <dbReference type="ChEBI" id="CHEBI:456216"/>
        <note>allosteric activator; ligand shared between dimeric partners</note>
    </ligand>
</feature>
<feature type="binding site" evidence="1">
    <location>
        <begin position="74"/>
        <end position="75"/>
    </location>
    <ligand>
        <name>ATP</name>
        <dbReference type="ChEBI" id="CHEBI:30616"/>
    </ligand>
</feature>
<feature type="binding site" evidence="1">
    <location>
        <begin position="104"/>
        <end position="107"/>
    </location>
    <ligand>
        <name>ATP</name>
        <dbReference type="ChEBI" id="CHEBI:30616"/>
    </ligand>
</feature>
<feature type="binding site" evidence="1">
    <location>
        <position position="105"/>
    </location>
    <ligand>
        <name>Mg(2+)</name>
        <dbReference type="ChEBI" id="CHEBI:18420"/>
        <note>catalytic</note>
    </ligand>
</feature>
<feature type="binding site" description="in other chain" evidence="1">
    <location>
        <begin position="127"/>
        <end position="129"/>
    </location>
    <ligand>
        <name>substrate</name>
        <note>ligand shared between dimeric partners</note>
    </ligand>
</feature>
<feature type="binding site" description="in other chain" evidence="1">
    <location>
        <position position="156"/>
    </location>
    <ligand>
        <name>ADP</name>
        <dbReference type="ChEBI" id="CHEBI:456216"/>
        <note>allosteric activator; ligand shared between dimeric partners</note>
    </ligand>
</feature>
<feature type="binding site" evidence="1">
    <location>
        <position position="164"/>
    </location>
    <ligand>
        <name>substrate</name>
        <note>ligand shared between dimeric partners</note>
    </ligand>
</feature>
<feature type="binding site" description="in other chain" evidence="1">
    <location>
        <begin position="171"/>
        <end position="173"/>
    </location>
    <ligand>
        <name>substrate</name>
        <note>ligand shared between dimeric partners</note>
    </ligand>
</feature>
<feature type="binding site" description="in other chain" evidence="1">
    <location>
        <begin position="187"/>
        <end position="189"/>
    </location>
    <ligand>
        <name>ADP</name>
        <dbReference type="ChEBI" id="CHEBI:456216"/>
        <note>allosteric activator; ligand shared between dimeric partners</note>
    </ligand>
</feature>
<feature type="binding site" description="in other chain" evidence="1">
    <location>
        <begin position="215"/>
        <end position="217"/>
    </location>
    <ligand>
        <name>ADP</name>
        <dbReference type="ChEBI" id="CHEBI:456216"/>
        <note>allosteric activator; ligand shared between dimeric partners</note>
    </ligand>
</feature>
<feature type="binding site" description="in other chain" evidence="1">
    <location>
        <position position="224"/>
    </location>
    <ligand>
        <name>substrate</name>
        <note>ligand shared between dimeric partners</note>
    </ligand>
</feature>
<feature type="binding site" evidence="1">
    <location>
        <position position="246"/>
    </location>
    <ligand>
        <name>substrate</name>
        <note>ligand shared between dimeric partners</note>
    </ligand>
</feature>
<feature type="binding site" description="in other chain" evidence="1">
    <location>
        <begin position="252"/>
        <end position="255"/>
    </location>
    <ligand>
        <name>substrate</name>
        <note>ligand shared between dimeric partners</note>
    </ligand>
</feature>
<sequence length="322" mass="34649">MTIKKIAVLTSGGDSQGMNAAVRAVVRSGLFYGLEVYGIQRGYQGLLNDDIFSMDLRSVGDIIQRGGTVLQSARCKEFMTPEGQQKGADILRKRGIDGLVVIGGDGSYHGANKLSKLGINTMALPGTIDNDISYTDFTIGFDTSVSIVVDAINKLRDTMSSHERSSIVEVMGRHCGDIALYAGLASGAETIIVPEVPFDMDEIAERMKQNFAHGKRHSIVVVAEGAGNGENVAKQLVERCETLEPRVTVLGHIQRGGTPTPADRNLASRLGDFAVRMLIAGESAKACGIISNELVLTDIDKVVNSKKEFNMELYELAARLSQ</sequence>
<organism>
    <name type="scientific">Paenibacillus macquariensis</name>
    <name type="common">Bacillus macquariensis</name>
    <dbReference type="NCBI Taxonomy" id="1468"/>
    <lineage>
        <taxon>Bacteria</taxon>
        <taxon>Bacillati</taxon>
        <taxon>Bacillota</taxon>
        <taxon>Bacilli</taxon>
        <taxon>Bacillales</taxon>
        <taxon>Paenibacillaceae</taxon>
        <taxon>Paenibacillus</taxon>
    </lineage>
</organism>
<name>PFKA_PAEMC</name>